<gene>
    <name evidence="2" type="primary">rpoA</name>
    <name type="ordered locus">tlr0105</name>
</gene>
<proteinExistence type="inferred from homology"/>
<feature type="chain" id="PRO_0000175401" description="DNA-directed RNA polymerase subunit alpha">
    <location>
        <begin position="1"/>
        <end position="321"/>
    </location>
</feature>
<feature type="region of interest" description="Alpha N-terminal domain (alpha-NTD)" evidence="2">
    <location>
        <begin position="1"/>
        <end position="235"/>
    </location>
</feature>
<feature type="region of interest" description="Alpha C-terminal domain (alpha-CTD)" evidence="2">
    <location>
        <begin position="252"/>
        <end position="321"/>
    </location>
</feature>
<keyword id="KW-0240">DNA-directed RNA polymerase</keyword>
<keyword id="KW-0548">Nucleotidyltransferase</keyword>
<keyword id="KW-1185">Reference proteome</keyword>
<keyword id="KW-0804">Transcription</keyword>
<keyword id="KW-0808">Transferase</keyword>
<evidence type="ECO:0000250" key="1"/>
<evidence type="ECO:0000255" key="2">
    <source>
        <dbReference type="HAMAP-Rule" id="MF_00059"/>
    </source>
</evidence>
<dbReference type="EC" id="2.7.7.6" evidence="2"/>
<dbReference type="EMBL" id="BA000039">
    <property type="protein sequence ID" value="BAC07658.1"/>
    <property type="molecule type" value="Genomic_DNA"/>
</dbReference>
<dbReference type="RefSeq" id="NP_680896.1">
    <property type="nucleotide sequence ID" value="NC_004113.1"/>
</dbReference>
<dbReference type="RefSeq" id="WP_011055960.1">
    <property type="nucleotide sequence ID" value="NC_004113.1"/>
</dbReference>
<dbReference type="SMR" id="Q8DML0"/>
<dbReference type="STRING" id="197221.gene:10746683"/>
<dbReference type="EnsemblBacteria" id="BAC07658">
    <property type="protein sequence ID" value="BAC07658"/>
    <property type="gene ID" value="BAC07658"/>
</dbReference>
<dbReference type="KEGG" id="tel:tlr0105"/>
<dbReference type="PATRIC" id="fig|197221.4.peg.108"/>
<dbReference type="eggNOG" id="COG0202">
    <property type="taxonomic scope" value="Bacteria"/>
</dbReference>
<dbReference type="Proteomes" id="UP000000440">
    <property type="component" value="Chromosome"/>
</dbReference>
<dbReference type="GO" id="GO:0005737">
    <property type="term" value="C:cytoplasm"/>
    <property type="evidence" value="ECO:0007669"/>
    <property type="project" value="UniProtKB-ARBA"/>
</dbReference>
<dbReference type="GO" id="GO:0000428">
    <property type="term" value="C:DNA-directed RNA polymerase complex"/>
    <property type="evidence" value="ECO:0007669"/>
    <property type="project" value="UniProtKB-KW"/>
</dbReference>
<dbReference type="GO" id="GO:0003677">
    <property type="term" value="F:DNA binding"/>
    <property type="evidence" value="ECO:0007669"/>
    <property type="project" value="UniProtKB-UniRule"/>
</dbReference>
<dbReference type="GO" id="GO:0003899">
    <property type="term" value="F:DNA-directed RNA polymerase activity"/>
    <property type="evidence" value="ECO:0007669"/>
    <property type="project" value="UniProtKB-UniRule"/>
</dbReference>
<dbReference type="GO" id="GO:0046983">
    <property type="term" value="F:protein dimerization activity"/>
    <property type="evidence" value="ECO:0007669"/>
    <property type="project" value="InterPro"/>
</dbReference>
<dbReference type="GO" id="GO:0006351">
    <property type="term" value="P:DNA-templated transcription"/>
    <property type="evidence" value="ECO:0007669"/>
    <property type="project" value="UniProtKB-UniRule"/>
</dbReference>
<dbReference type="CDD" id="cd06928">
    <property type="entry name" value="RNAP_alpha_NTD"/>
    <property type="match status" value="1"/>
</dbReference>
<dbReference type="FunFam" id="2.170.120.12:FF:000001">
    <property type="entry name" value="DNA-directed RNA polymerase subunit alpha"/>
    <property type="match status" value="1"/>
</dbReference>
<dbReference type="Gene3D" id="1.10.150.20">
    <property type="entry name" value="5' to 3' exonuclease, C-terminal subdomain"/>
    <property type="match status" value="1"/>
</dbReference>
<dbReference type="Gene3D" id="2.170.120.12">
    <property type="entry name" value="DNA-directed RNA polymerase, insert domain"/>
    <property type="match status" value="1"/>
</dbReference>
<dbReference type="Gene3D" id="3.30.1360.10">
    <property type="entry name" value="RNA polymerase, RBP11-like subunit"/>
    <property type="match status" value="1"/>
</dbReference>
<dbReference type="HAMAP" id="MF_00059">
    <property type="entry name" value="RNApol_bact_RpoA"/>
    <property type="match status" value="1"/>
</dbReference>
<dbReference type="InterPro" id="IPR011262">
    <property type="entry name" value="DNA-dir_RNA_pol_insert"/>
</dbReference>
<dbReference type="InterPro" id="IPR011263">
    <property type="entry name" value="DNA-dir_RNA_pol_RpoA/D/Rpb3"/>
</dbReference>
<dbReference type="InterPro" id="IPR011773">
    <property type="entry name" value="DNA-dir_RpoA"/>
</dbReference>
<dbReference type="InterPro" id="IPR036603">
    <property type="entry name" value="RBP11-like"/>
</dbReference>
<dbReference type="InterPro" id="IPR011260">
    <property type="entry name" value="RNAP_asu_C"/>
</dbReference>
<dbReference type="InterPro" id="IPR036643">
    <property type="entry name" value="RNApol_insert_sf"/>
</dbReference>
<dbReference type="NCBIfam" id="NF003516">
    <property type="entry name" value="PRK05182.2-2"/>
    <property type="match status" value="1"/>
</dbReference>
<dbReference type="NCBIfam" id="NF003519">
    <property type="entry name" value="PRK05182.2-5"/>
    <property type="match status" value="1"/>
</dbReference>
<dbReference type="NCBIfam" id="TIGR02027">
    <property type="entry name" value="rpoA"/>
    <property type="match status" value="1"/>
</dbReference>
<dbReference type="Pfam" id="PF01000">
    <property type="entry name" value="RNA_pol_A_bac"/>
    <property type="match status" value="1"/>
</dbReference>
<dbReference type="Pfam" id="PF03118">
    <property type="entry name" value="RNA_pol_A_CTD"/>
    <property type="match status" value="1"/>
</dbReference>
<dbReference type="Pfam" id="PF01193">
    <property type="entry name" value="RNA_pol_L"/>
    <property type="match status" value="1"/>
</dbReference>
<dbReference type="SMART" id="SM00662">
    <property type="entry name" value="RPOLD"/>
    <property type="match status" value="1"/>
</dbReference>
<dbReference type="SUPFAM" id="SSF47789">
    <property type="entry name" value="C-terminal domain of RNA polymerase alpha subunit"/>
    <property type="match status" value="1"/>
</dbReference>
<dbReference type="SUPFAM" id="SSF56553">
    <property type="entry name" value="Insert subdomain of RNA polymerase alpha subunit"/>
    <property type="match status" value="1"/>
</dbReference>
<dbReference type="SUPFAM" id="SSF55257">
    <property type="entry name" value="RBP11-like subunits of RNA polymerase"/>
    <property type="match status" value="1"/>
</dbReference>
<reference key="1">
    <citation type="journal article" date="2002" name="DNA Res.">
        <title>Complete genome structure of the thermophilic cyanobacterium Thermosynechococcus elongatus BP-1.</title>
        <authorList>
            <person name="Nakamura Y."/>
            <person name="Kaneko T."/>
            <person name="Sato S."/>
            <person name="Ikeuchi M."/>
            <person name="Katoh H."/>
            <person name="Sasamoto S."/>
            <person name="Watanabe A."/>
            <person name="Iriguchi M."/>
            <person name="Kawashima K."/>
            <person name="Kimura T."/>
            <person name="Kishida Y."/>
            <person name="Kiyokawa C."/>
            <person name="Kohara M."/>
            <person name="Matsumoto M."/>
            <person name="Matsuno A."/>
            <person name="Nakazaki N."/>
            <person name="Shimpo S."/>
            <person name="Sugimoto M."/>
            <person name="Takeuchi C."/>
            <person name="Yamada M."/>
            <person name="Tabata S."/>
        </authorList>
    </citation>
    <scope>NUCLEOTIDE SEQUENCE [LARGE SCALE GENOMIC DNA]</scope>
    <source>
        <strain>NIES-2133 / IAM M-273 / BP-1</strain>
    </source>
</reference>
<comment type="function">
    <text evidence="2">DNA-dependent RNA polymerase catalyzes the transcription of DNA into RNA using the four ribonucleoside triphosphates as substrates.</text>
</comment>
<comment type="catalytic activity">
    <reaction evidence="2">
        <text>RNA(n) + a ribonucleoside 5'-triphosphate = RNA(n+1) + diphosphate</text>
        <dbReference type="Rhea" id="RHEA:21248"/>
        <dbReference type="Rhea" id="RHEA-COMP:14527"/>
        <dbReference type="Rhea" id="RHEA-COMP:17342"/>
        <dbReference type="ChEBI" id="CHEBI:33019"/>
        <dbReference type="ChEBI" id="CHEBI:61557"/>
        <dbReference type="ChEBI" id="CHEBI:140395"/>
        <dbReference type="EC" id="2.7.7.6"/>
    </reaction>
</comment>
<comment type="subunit">
    <text evidence="1">Homodimer. In cyanobacteria the RNAP catalytic core is composed of 2 alpha, 1 beta, 1 beta', 1 gamma and 1 omega subunit. When a sigma factor is associated with the core the holoenzyme is formed, which can initiate transcription (By similarity).</text>
</comment>
<comment type="domain">
    <text evidence="2">The N-terminal domain is essential for RNAP assembly and basal transcription, whereas the C-terminal domain is involved in interaction with transcriptional regulators and with upstream promoter elements.</text>
</comment>
<comment type="similarity">
    <text evidence="2">Belongs to the RNA polymerase alpha chain family.</text>
</comment>
<name>RPOA_THEVB</name>
<protein>
    <recommendedName>
        <fullName evidence="2">DNA-directed RNA polymerase subunit alpha</fullName>
        <shortName evidence="2">RNAP subunit alpha</shortName>
        <ecNumber evidence="2">2.7.7.6</ecNumber>
    </recommendedName>
    <alternativeName>
        <fullName evidence="2">RNA polymerase subunit alpha</fullName>
    </alternativeName>
    <alternativeName>
        <fullName evidence="2">Transcriptase subunit alpha</fullName>
    </alternativeName>
</protein>
<organism>
    <name type="scientific">Thermosynechococcus vestitus (strain NIES-2133 / IAM M-273 / BP-1)</name>
    <dbReference type="NCBI Taxonomy" id="197221"/>
    <lineage>
        <taxon>Bacteria</taxon>
        <taxon>Bacillati</taxon>
        <taxon>Cyanobacteriota</taxon>
        <taxon>Cyanophyceae</taxon>
        <taxon>Acaryochloridales</taxon>
        <taxon>Thermosynechococcaceae</taxon>
        <taxon>Thermosynechococcus</taxon>
    </lineage>
</organism>
<sequence length="321" mass="35685">MAYQIECLETRVEEDQGQYGQFALHPLAPGQGITVGNALRRVLLSNLPGSAVTAVRIAGVNHEFSTIPGVREDVMDILLQMKQLVIRSHTSEPQMGRLFAQAPENEPLTVTAGMVQLGSEVEVVNPNHYIATLMPGATLEMEFKIEKDRGYRSVERVRDDRLALDYLQLDAVFMPVRRVNYTVDSVRSAGAEGDRQLQDYLKLEIWTNGSLTPQDALNQAATILVDLFSPLKEVPLHTSEATATDDHDETGQIPIEQLNLSVRAYNCLKRAQVNTVADLLEYSQEELLEIKNFGQKSAEEVIEALQKHLGITLPPQKAARN</sequence>
<accession>Q8DML0</accession>